<protein>
    <recommendedName>
        <fullName evidence="4">U-actitoxin-Avd8e</fullName>
        <shortName evidence="4">U-AITX-Avd8e</shortName>
    </recommendedName>
    <alternativeName>
        <fullName evidence="3">Avtx-5</fullName>
    </alternativeName>
</protein>
<reference key="1">
    <citation type="journal article" date="2009" name="BMC Genomics">
        <title>Comprehensive EST analysis of the symbiotic sea anemone, Anemonia viridis.</title>
        <authorList>
            <person name="Sabourault C."/>
            <person name="Ganot P."/>
            <person name="Deleury E."/>
            <person name="Allemand D."/>
            <person name="Furla P."/>
        </authorList>
    </citation>
    <scope>NUCLEOTIDE SEQUENCE [MRNA]</scope>
</reference>
<reference key="2">
    <citation type="journal article" date="2011" name="BMC Genomics">
        <title>The mining of toxin-like polypeptides from EST database by single residue distribution analysis.</title>
        <authorList>
            <person name="Kozlov S."/>
            <person name="Grishin E."/>
        </authorList>
    </citation>
    <scope>NOMENCLATURE</scope>
</reference>
<reference key="3">
    <citation type="journal article" date="2012" name="Toxicon">
        <title>Development of a rational nomenclature for naming peptide and protein toxins from sea anemones.</title>
        <authorList>
            <person name="Oliveira J.S."/>
            <person name="Fuentes-Silva D."/>
            <person name="King G.F."/>
        </authorList>
    </citation>
    <scope>NOMENCLATURE</scope>
</reference>
<evidence type="ECO:0000255" key="1"/>
<evidence type="ECO:0000255" key="2">
    <source>
        <dbReference type="PROSITE-ProRule" id="PRU01005"/>
    </source>
</evidence>
<evidence type="ECO:0000303" key="3">
    <source>
    </source>
</evidence>
<evidence type="ECO:0000303" key="4">
    <source>
    </source>
</evidence>
<evidence type="ECO:0000305" key="5"/>
<evidence type="ECO:0000305" key="6">
    <source>
    </source>
</evidence>
<comment type="subcellular location">
    <subcellularLocation>
        <location evidence="5">Secreted</location>
    </subcellularLocation>
    <subcellularLocation>
        <location evidence="5">Nematocyst</location>
    </subcellularLocation>
</comment>
<comment type="similarity">
    <text evidence="5">Belongs to the sea anemone 8 toxin family.</text>
</comment>
<comment type="caution">
    <text evidence="5">Opinions are divided on whether Anemonia viridis (Forsskal, 1775) and Anemonia sulcata (Pennant, 1777) are separate species.</text>
</comment>
<feature type="signal peptide" evidence="1">
    <location>
        <begin position="1"/>
        <end position="22"/>
    </location>
</feature>
<feature type="propeptide" id="PRO_0000433711" evidence="6">
    <location>
        <begin position="23"/>
        <end position="41"/>
    </location>
</feature>
<feature type="chain" id="PRO_0000433712" description="U-actitoxin-Avd8e">
    <location>
        <begin position="44"/>
        <end position="84"/>
    </location>
</feature>
<feature type="domain" description="ShKT" evidence="2">
    <location>
        <begin position="44"/>
        <end position="84"/>
    </location>
</feature>
<feature type="disulfide bond" evidence="2">
    <location>
        <begin position="44"/>
        <end position="84"/>
    </location>
</feature>
<feature type="disulfide bond" evidence="2">
    <location>
        <begin position="53"/>
        <end position="77"/>
    </location>
</feature>
<feature type="disulfide bond" evidence="2">
    <location>
        <begin position="62"/>
        <end position="81"/>
    </location>
</feature>
<organism>
    <name type="scientific">Anemonia viridis</name>
    <name type="common">Snakelocks anemone</name>
    <dbReference type="NCBI Taxonomy" id="51769"/>
    <lineage>
        <taxon>Eukaryota</taxon>
        <taxon>Metazoa</taxon>
        <taxon>Cnidaria</taxon>
        <taxon>Anthozoa</taxon>
        <taxon>Hexacorallia</taxon>
        <taxon>Actiniaria</taxon>
        <taxon>Actiniidae</taxon>
        <taxon>Anemonia</taxon>
    </lineage>
</organism>
<proteinExistence type="inferred from homology"/>
<accession>P0DMZ7</accession>
<name>TX8E_ANEVI</name>
<sequence length="84" mass="9481">MASARTLVLLLIGAVLMCQVSADSELLNEILAAHMEEDMPEKRCIDRYRSNICGSVIRPLDCTRRKSRMGRFARTNCKKLCGFC</sequence>
<dbReference type="EMBL" id="FK740713">
    <property type="status" value="NOT_ANNOTATED_CDS"/>
    <property type="molecule type" value="mRNA"/>
</dbReference>
<dbReference type="EMBL" id="FK724537">
    <property type="status" value="NOT_ANNOTATED_CDS"/>
    <property type="molecule type" value="mRNA"/>
</dbReference>
<dbReference type="SMR" id="P0DMZ7"/>
<dbReference type="GO" id="GO:0005576">
    <property type="term" value="C:extracellular region"/>
    <property type="evidence" value="ECO:0007669"/>
    <property type="project" value="UniProtKB-SubCell"/>
</dbReference>
<dbReference type="GO" id="GO:0042151">
    <property type="term" value="C:nematocyst"/>
    <property type="evidence" value="ECO:0007669"/>
    <property type="project" value="UniProtKB-SubCell"/>
</dbReference>
<dbReference type="GO" id="GO:0090729">
    <property type="term" value="F:toxin activity"/>
    <property type="evidence" value="ECO:0007669"/>
    <property type="project" value="UniProtKB-KW"/>
</dbReference>
<keyword id="KW-0165">Cleavage on pair of basic residues</keyword>
<keyword id="KW-1015">Disulfide bond</keyword>
<keyword id="KW-0166">Nematocyst</keyword>
<keyword id="KW-0964">Secreted</keyword>
<keyword id="KW-0732">Signal</keyword>
<keyword id="KW-0800">Toxin</keyword>